<gene>
    <name type="ORF">SPCC1620.06c</name>
</gene>
<name>KPR2_SCHPO</name>
<sequence>MASNSIKIFAGNSHPELAEKVARRIGLSLGKVAVVQYSNRETSVTIGESVRDEDVFILQTGCGSINDHLMELLIMINACRSASARRITAIIPCFPYARQDKKDKSRAPITARLVANMLQTAGCNHIITMDLHASQIQGFFNVPVDNLYAEPSVLRYIRENIDTTVNPTVIVSPDAGGAKRATALADRLDLDFALIHKERQKANEVSRMVLVGDVRDKLAILVDDMADTCGTLGLAAKTLKDNGAKAVYAIVTHGILSGKAIKVINESALEKVIVTNTIPHDDKRSLCSKIETIDISGVLAECIRRIHHGESVSVLFSVAPA</sequence>
<comment type="function">
    <text evidence="1">5-phosphoribose 1-diphosphate synthase involved in nucleotide, histidine, and tryptophan biosynthesis. Active in heteromultimeric complexes with other 5-phosphoribose 1-diphosphate synthases (By similarity).</text>
</comment>
<comment type="catalytic activity">
    <reaction evidence="2">
        <text>D-ribose 5-phosphate + ATP = 5-phospho-alpha-D-ribose 1-diphosphate + AMP + H(+)</text>
        <dbReference type="Rhea" id="RHEA:15609"/>
        <dbReference type="ChEBI" id="CHEBI:15378"/>
        <dbReference type="ChEBI" id="CHEBI:30616"/>
        <dbReference type="ChEBI" id="CHEBI:58017"/>
        <dbReference type="ChEBI" id="CHEBI:78346"/>
        <dbReference type="ChEBI" id="CHEBI:456215"/>
        <dbReference type="EC" id="2.7.6.1"/>
    </reaction>
</comment>
<comment type="pathway">
    <text evidence="2">Metabolic intermediate biosynthesis; 5-phospho-alpha-D-ribose 1-diphosphate biosynthesis; 5-phospho-alpha-D-ribose 1-diphosphate from D-ribose 5-phosphate (route I): step 1/1.</text>
</comment>
<comment type="subcellular location">
    <subcellularLocation>
        <location evidence="4">Cytoplasm</location>
    </subcellularLocation>
</comment>
<comment type="similarity">
    <text evidence="3">Belongs to the ribose-phosphate pyrophosphokinase family.</text>
</comment>
<organism>
    <name type="scientific">Schizosaccharomyces pombe (strain 972 / ATCC 24843)</name>
    <name type="common">Fission yeast</name>
    <dbReference type="NCBI Taxonomy" id="284812"/>
    <lineage>
        <taxon>Eukaryota</taxon>
        <taxon>Fungi</taxon>
        <taxon>Dikarya</taxon>
        <taxon>Ascomycota</taxon>
        <taxon>Taphrinomycotina</taxon>
        <taxon>Schizosaccharomycetes</taxon>
        <taxon>Schizosaccharomycetales</taxon>
        <taxon>Schizosaccharomycetaceae</taxon>
        <taxon>Schizosaccharomyces</taxon>
    </lineage>
</organism>
<protein>
    <recommendedName>
        <fullName>Ribose-phosphate pyrophosphokinase 2</fullName>
        <ecNumber>2.7.6.1</ecNumber>
    </recommendedName>
    <alternativeName>
        <fullName>Phosphoribosyl pyrophosphate synthase 2</fullName>
    </alternativeName>
</protein>
<proteinExistence type="evidence at protein level"/>
<feature type="chain" id="PRO_0000309463" description="Ribose-phosphate pyrophosphokinase 2">
    <location>
        <begin position="1"/>
        <end position="321"/>
    </location>
</feature>
<feature type="binding site" evidence="2 3">
    <location>
        <position position="130"/>
    </location>
    <ligand>
        <name>Mg(2+)</name>
        <dbReference type="ChEBI" id="CHEBI:18420"/>
    </ligand>
</feature>
<feature type="binding site" evidence="2 3">
    <location>
        <position position="132"/>
    </location>
    <ligand>
        <name>Mg(2+)</name>
        <dbReference type="ChEBI" id="CHEBI:18420"/>
    </ligand>
</feature>
<feature type="binding site" evidence="2 3">
    <location>
        <position position="145"/>
    </location>
    <ligand>
        <name>Mg(2+)</name>
        <dbReference type="ChEBI" id="CHEBI:18420"/>
    </ligand>
</feature>
<feature type="modified residue" description="Phosphoserine" evidence="5">
    <location>
        <position position="172"/>
    </location>
</feature>
<evidence type="ECO:0000250" key="1"/>
<evidence type="ECO:0000250" key="2">
    <source>
        <dbReference type="UniProtKB" id="P38689"/>
    </source>
</evidence>
<evidence type="ECO:0000255" key="3"/>
<evidence type="ECO:0000269" key="4">
    <source>
    </source>
</evidence>
<evidence type="ECO:0000269" key="5">
    <source>
    </source>
</evidence>
<evidence type="ECO:0000305" key="6"/>
<evidence type="ECO:0000312" key="7">
    <source>
        <dbReference type="EMBL" id="CAA22490.1"/>
    </source>
</evidence>
<dbReference type="EC" id="2.7.6.1"/>
<dbReference type="EMBL" id="CU329672">
    <property type="protein sequence ID" value="CAA22490.1"/>
    <property type="molecule type" value="Genomic_DNA"/>
</dbReference>
<dbReference type="PIR" id="T41036">
    <property type="entry name" value="T41036"/>
</dbReference>
<dbReference type="RefSeq" id="NP_588464.1">
    <property type="nucleotide sequence ID" value="NM_001023455.2"/>
</dbReference>
<dbReference type="SMR" id="O94413"/>
<dbReference type="BioGRID" id="275501">
    <property type="interactions" value="4"/>
</dbReference>
<dbReference type="FunCoup" id="O94413">
    <property type="interactions" value="310"/>
</dbReference>
<dbReference type="STRING" id="284812.O94413"/>
<dbReference type="iPTMnet" id="O94413"/>
<dbReference type="PaxDb" id="4896-SPCC1620.06c.1"/>
<dbReference type="EnsemblFungi" id="SPCC1620.06c.1">
    <property type="protein sequence ID" value="SPCC1620.06c.1:pep"/>
    <property type="gene ID" value="SPCC1620.06c"/>
</dbReference>
<dbReference type="KEGG" id="spo:2538924"/>
<dbReference type="PomBase" id="SPCC1620.06c"/>
<dbReference type="VEuPathDB" id="FungiDB:SPCC1620.06c"/>
<dbReference type="eggNOG" id="KOG1448">
    <property type="taxonomic scope" value="Eukaryota"/>
</dbReference>
<dbReference type="HOGENOM" id="CLU_033546_4_0_1"/>
<dbReference type="InParanoid" id="O94413"/>
<dbReference type="OMA" id="YFGWARQ"/>
<dbReference type="PhylomeDB" id="O94413"/>
<dbReference type="Reactome" id="R-SPO-73843">
    <property type="pathway name" value="5-Phosphoribose 1-diphosphate biosynthesis"/>
</dbReference>
<dbReference type="UniPathway" id="UPA00087">
    <property type="reaction ID" value="UER00172"/>
</dbReference>
<dbReference type="PRO" id="PR:O94413"/>
<dbReference type="Proteomes" id="UP000002485">
    <property type="component" value="Chromosome III"/>
</dbReference>
<dbReference type="GO" id="GO:0005737">
    <property type="term" value="C:cytoplasm"/>
    <property type="evidence" value="ECO:0000318"/>
    <property type="project" value="GO_Central"/>
</dbReference>
<dbReference type="GO" id="GO:0005829">
    <property type="term" value="C:cytosol"/>
    <property type="evidence" value="ECO:0007005"/>
    <property type="project" value="PomBase"/>
</dbReference>
<dbReference type="GO" id="GO:0002189">
    <property type="term" value="C:ribose phosphate diphosphokinase complex"/>
    <property type="evidence" value="ECO:0000266"/>
    <property type="project" value="PomBase"/>
</dbReference>
<dbReference type="GO" id="GO:0005524">
    <property type="term" value="F:ATP binding"/>
    <property type="evidence" value="ECO:0007669"/>
    <property type="project" value="UniProtKB-KW"/>
</dbReference>
<dbReference type="GO" id="GO:0016301">
    <property type="term" value="F:kinase activity"/>
    <property type="evidence" value="ECO:0007669"/>
    <property type="project" value="UniProtKB-KW"/>
</dbReference>
<dbReference type="GO" id="GO:0000287">
    <property type="term" value="F:magnesium ion binding"/>
    <property type="evidence" value="ECO:0007669"/>
    <property type="project" value="InterPro"/>
</dbReference>
<dbReference type="GO" id="GO:0004749">
    <property type="term" value="F:ribose phosphate diphosphokinase activity"/>
    <property type="evidence" value="ECO:0000318"/>
    <property type="project" value="GO_Central"/>
</dbReference>
<dbReference type="GO" id="GO:0006015">
    <property type="term" value="P:5-phosphoribose 1-diphosphate biosynthetic process"/>
    <property type="evidence" value="ECO:0000318"/>
    <property type="project" value="GO_Central"/>
</dbReference>
<dbReference type="GO" id="GO:0006164">
    <property type="term" value="P:purine nucleotide biosynthetic process"/>
    <property type="evidence" value="ECO:0000318"/>
    <property type="project" value="GO_Central"/>
</dbReference>
<dbReference type="GO" id="GO:0009156">
    <property type="term" value="P:ribonucleoside monophosphate biosynthetic process"/>
    <property type="evidence" value="ECO:0007669"/>
    <property type="project" value="InterPro"/>
</dbReference>
<dbReference type="CDD" id="cd06223">
    <property type="entry name" value="PRTases_typeI"/>
    <property type="match status" value="1"/>
</dbReference>
<dbReference type="FunFam" id="3.40.50.2020:FF:000031">
    <property type="entry name" value="Probable PRS4-ribose-phosphate pyrophosphokinase 3"/>
    <property type="match status" value="1"/>
</dbReference>
<dbReference type="FunFam" id="3.40.50.2020:FF:000005">
    <property type="entry name" value="Ribose-phosphate pyrophosphokinase 1"/>
    <property type="match status" value="1"/>
</dbReference>
<dbReference type="Gene3D" id="3.40.50.2020">
    <property type="match status" value="2"/>
</dbReference>
<dbReference type="InterPro" id="IPR000842">
    <property type="entry name" value="PRib_PP_synth_CS"/>
</dbReference>
<dbReference type="InterPro" id="IPR029099">
    <property type="entry name" value="Pribosyltran_N"/>
</dbReference>
<dbReference type="InterPro" id="IPR000836">
    <property type="entry name" value="PRibTrfase_dom"/>
</dbReference>
<dbReference type="InterPro" id="IPR029057">
    <property type="entry name" value="PRTase-like"/>
</dbReference>
<dbReference type="InterPro" id="IPR005946">
    <property type="entry name" value="Rib-P_diPkinase"/>
</dbReference>
<dbReference type="NCBIfam" id="NF002320">
    <property type="entry name" value="PRK01259.1"/>
    <property type="match status" value="1"/>
</dbReference>
<dbReference type="NCBIfam" id="TIGR01251">
    <property type="entry name" value="ribP_PPkin"/>
    <property type="match status" value="1"/>
</dbReference>
<dbReference type="PANTHER" id="PTHR10210">
    <property type="entry name" value="RIBOSE-PHOSPHATE DIPHOSPHOKINASE FAMILY MEMBER"/>
    <property type="match status" value="1"/>
</dbReference>
<dbReference type="PANTHER" id="PTHR10210:SF32">
    <property type="entry name" value="RIBOSE-PHOSPHATE PYROPHOSPHOKINASE 2"/>
    <property type="match status" value="1"/>
</dbReference>
<dbReference type="Pfam" id="PF14572">
    <property type="entry name" value="Pribosyl_synth"/>
    <property type="match status" value="1"/>
</dbReference>
<dbReference type="Pfam" id="PF13793">
    <property type="entry name" value="Pribosyltran_N"/>
    <property type="match status" value="1"/>
</dbReference>
<dbReference type="SMART" id="SM01400">
    <property type="entry name" value="Pribosyltran_N"/>
    <property type="match status" value="1"/>
</dbReference>
<dbReference type="SUPFAM" id="SSF53271">
    <property type="entry name" value="PRTase-like"/>
    <property type="match status" value="1"/>
</dbReference>
<dbReference type="PROSITE" id="PS00114">
    <property type="entry name" value="PRPP_SYNTHASE"/>
    <property type="match status" value="1"/>
</dbReference>
<keyword id="KW-0067">ATP-binding</keyword>
<keyword id="KW-0963">Cytoplasm</keyword>
<keyword id="KW-0418">Kinase</keyword>
<keyword id="KW-0460">Magnesium</keyword>
<keyword id="KW-0479">Metal-binding</keyword>
<keyword id="KW-0545">Nucleotide biosynthesis</keyword>
<keyword id="KW-0547">Nucleotide-binding</keyword>
<keyword id="KW-0597">Phosphoprotein</keyword>
<keyword id="KW-1185">Reference proteome</keyword>
<keyword id="KW-0808">Transferase</keyword>
<accession>O94413</accession>
<reference evidence="7" key="1">
    <citation type="journal article" date="2002" name="Nature">
        <title>The genome sequence of Schizosaccharomyces pombe.</title>
        <authorList>
            <person name="Wood V."/>
            <person name="Gwilliam R."/>
            <person name="Rajandream M.A."/>
            <person name="Lyne M.H."/>
            <person name="Lyne R."/>
            <person name="Stewart A."/>
            <person name="Sgouros J.G."/>
            <person name="Peat N."/>
            <person name="Hayles J."/>
            <person name="Baker S.G."/>
            <person name="Basham D."/>
            <person name="Bowman S."/>
            <person name="Brooks K."/>
            <person name="Brown D."/>
            <person name="Brown S."/>
            <person name="Chillingworth T."/>
            <person name="Churcher C.M."/>
            <person name="Collins M."/>
            <person name="Connor R."/>
            <person name="Cronin A."/>
            <person name="Davis P."/>
            <person name="Feltwell T."/>
            <person name="Fraser A."/>
            <person name="Gentles S."/>
            <person name="Goble A."/>
            <person name="Hamlin N."/>
            <person name="Harris D.E."/>
            <person name="Hidalgo J."/>
            <person name="Hodgson G."/>
            <person name="Holroyd S."/>
            <person name="Hornsby T."/>
            <person name="Howarth S."/>
            <person name="Huckle E.J."/>
            <person name="Hunt S."/>
            <person name="Jagels K."/>
            <person name="James K.D."/>
            <person name="Jones L."/>
            <person name="Jones M."/>
            <person name="Leather S."/>
            <person name="McDonald S."/>
            <person name="McLean J."/>
            <person name="Mooney P."/>
            <person name="Moule S."/>
            <person name="Mungall K.L."/>
            <person name="Murphy L.D."/>
            <person name="Niblett D."/>
            <person name="Odell C."/>
            <person name="Oliver K."/>
            <person name="O'Neil S."/>
            <person name="Pearson D."/>
            <person name="Quail M.A."/>
            <person name="Rabbinowitsch E."/>
            <person name="Rutherford K.M."/>
            <person name="Rutter S."/>
            <person name="Saunders D."/>
            <person name="Seeger K."/>
            <person name="Sharp S."/>
            <person name="Skelton J."/>
            <person name="Simmonds M.N."/>
            <person name="Squares R."/>
            <person name="Squares S."/>
            <person name="Stevens K."/>
            <person name="Taylor K."/>
            <person name="Taylor R.G."/>
            <person name="Tivey A."/>
            <person name="Walsh S.V."/>
            <person name="Warren T."/>
            <person name="Whitehead S."/>
            <person name="Woodward J.R."/>
            <person name="Volckaert G."/>
            <person name="Aert R."/>
            <person name="Robben J."/>
            <person name="Grymonprez B."/>
            <person name="Weltjens I."/>
            <person name="Vanstreels E."/>
            <person name="Rieger M."/>
            <person name="Schaefer M."/>
            <person name="Mueller-Auer S."/>
            <person name="Gabel C."/>
            <person name="Fuchs M."/>
            <person name="Duesterhoeft A."/>
            <person name="Fritzc C."/>
            <person name="Holzer E."/>
            <person name="Moestl D."/>
            <person name="Hilbert H."/>
            <person name="Borzym K."/>
            <person name="Langer I."/>
            <person name="Beck A."/>
            <person name="Lehrach H."/>
            <person name="Reinhardt R."/>
            <person name="Pohl T.M."/>
            <person name="Eger P."/>
            <person name="Zimmermann W."/>
            <person name="Wedler H."/>
            <person name="Wambutt R."/>
            <person name="Purnelle B."/>
            <person name="Goffeau A."/>
            <person name="Cadieu E."/>
            <person name="Dreano S."/>
            <person name="Gloux S."/>
            <person name="Lelaure V."/>
            <person name="Mottier S."/>
            <person name="Galibert F."/>
            <person name="Aves S.J."/>
            <person name="Xiang Z."/>
            <person name="Hunt C."/>
            <person name="Moore K."/>
            <person name="Hurst S.M."/>
            <person name="Lucas M."/>
            <person name="Rochet M."/>
            <person name="Gaillardin C."/>
            <person name="Tallada V.A."/>
            <person name="Garzon A."/>
            <person name="Thode G."/>
            <person name="Daga R.R."/>
            <person name="Cruzado L."/>
            <person name="Jimenez J."/>
            <person name="Sanchez M."/>
            <person name="del Rey F."/>
            <person name="Benito J."/>
            <person name="Dominguez A."/>
            <person name="Revuelta J.L."/>
            <person name="Moreno S."/>
            <person name="Armstrong J."/>
            <person name="Forsburg S.L."/>
            <person name="Cerutti L."/>
            <person name="Lowe T."/>
            <person name="McCombie W.R."/>
            <person name="Paulsen I."/>
            <person name="Potashkin J."/>
            <person name="Shpakovski G.V."/>
            <person name="Ussery D."/>
            <person name="Barrell B.G."/>
            <person name="Nurse P."/>
        </authorList>
    </citation>
    <scope>NUCLEOTIDE SEQUENCE [LARGE SCALE GENOMIC DNA]</scope>
    <source>
        <strain>972 / ATCC 24843</strain>
    </source>
</reference>
<reference evidence="6" key="2">
    <citation type="journal article" date="2006" name="Nat. Biotechnol.">
        <title>ORFeome cloning and global analysis of protein localization in the fission yeast Schizosaccharomyces pombe.</title>
        <authorList>
            <person name="Matsuyama A."/>
            <person name="Arai R."/>
            <person name="Yashiroda Y."/>
            <person name="Shirai A."/>
            <person name="Kamata A."/>
            <person name="Sekido S."/>
            <person name="Kobayashi Y."/>
            <person name="Hashimoto A."/>
            <person name="Hamamoto M."/>
            <person name="Hiraoka Y."/>
            <person name="Horinouchi S."/>
            <person name="Yoshida M."/>
        </authorList>
    </citation>
    <scope>SUBCELLULAR LOCATION [LARGE SCALE ANALYSIS]</scope>
</reference>
<reference key="3">
    <citation type="journal article" date="2008" name="J. Proteome Res.">
        <title>Phosphoproteome analysis of fission yeast.</title>
        <authorList>
            <person name="Wilson-Grady J.T."/>
            <person name="Villen J."/>
            <person name="Gygi S.P."/>
        </authorList>
    </citation>
    <scope>PHOSPHORYLATION [LARGE SCALE ANALYSIS] AT SER-172</scope>
    <scope>IDENTIFICATION BY MASS SPECTROMETRY</scope>
</reference>